<reference key="1">
    <citation type="journal article" date="2016" name="Proc. Natl. Acad. Sci. U.S.A.">
        <title>Biosynthetic investigation of phomopsins reveals a widespread pathway for ribosomal natural products in Ascomycetes.</title>
        <authorList>
            <person name="Ding W."/>
            <person name="Liu W.Q."/>
            <person name="Jia Y."/>
            <person name="Li Y."/>
            <person name="van der Donk W.A."/>
            <person name="Zhang Q."/>
        </authorList>
    </citation>
    <scope>NUCLEOTIDE SEQUENCE [GENOMIC DNA]</scope>
    <scope>FUNCTION</scope>
    <source>
        <strain>ATCC 26115 / IMI 115107 / C 1557</strain>
    </source>
</reference>
<reference key="2">
    <citation type="journal article" date="2021" name="Angew. Chem. Int. Ed.">
        <title>Biosynthetic studies of phomopsins unveil posttranslational installation of dehydroamino acids by ustYa family proteins.</title>
        <authorList>
            <person name="Sogahata K."/>
            <person name="Ozaki T."/>
            <person name="Igarashi Y."/>
            <person name="Naganuma Y."/>
            <person name="Liu C."/>
            <person name="Minami A."/>
            <person name="Oikawa H."/>
        </authorList>
    </citation>
    <scope>NUCLEOTIDE SEQUENCE [GENOMIC DNA]</scope>
    <scope>FUNCTION</scope>
    <source>
        <strain>ATCC 26115 / IMI 115107 / C 1557</strain>
    </source>
</reference>
<protein>
    <recommendedName>
        <fullName evidence="6">MFS-type transporter phomT</fullName>
    </recommendedName>
    <alternativeName>
        <fullName evidence="7">Phomopsin biosynthesis cluster protein T</fullName>
    </alternativeName>
</protein>
<proteinExistence type="inferred from homology"/>
<dbReference type="EMBL" id="KU645828">
    <property type="protein sequence ID" value="AMR44276.1"/>
    <property type="molecule type" value="Genomic_DNA"/>
</dbReference>
<dbReference type="EMBL" id="LC646903">
    <property type="protein sequence ID" value="BDA39136.1"/>
    <property type="molecule type" value="Genomic_DNA"/>
</dbReference>
<dbReference type="SMR" id="A0A142I724"/>
<dbReference type="GO" id="GO:0005886">
    <property type="term" value="C:plasma membrane"/>
    <property type="evidence" value="ECO:0007669"/>
    <property type="project" value="UniProtKB-SubCell"/>
</dbReference>
<dbReference type="GO" id="GO:0022857">
    <property type="term" value="F:transmembrane transporter activity"/>
    <property type="evidence" value="ECO:0007669"/>
    <property type="project" value="InterPro"/>
</dbReference>
<dbReference type="CDD" id="cd17502">
    <property type="entry name" value="MFS_Azr1_MDR_like"/>
    <property type="match status" value="1"/>
</dbReference>
<dbReference type="FunFam" id="1.20.1250.20:FF:000489">
    <property type="entry name" value="MFS general substrate transporter"/>
    <property type="match status" value="1"/>
</dbReference>
<dbReference type="FunFam" id="1.20.1250.20:FF:000196">
    <property type="entry name" value="MFS toxin efflux pump (AflT)"/>
    <property type="match status" value="1"/>
</dbReference>
<dbReference type="FunFam" id="1.20.1720.10:FF:000012">
    <property type="entry name" value="MFS toxin efflux pump (AflT)"/>
    <property type="match status" value="1"/>
</dbReference>
<dbReference type="Gene3D" id="1.20.1250.20">
    <property type="entry name" value="MFS general substrate transporter like domains"/>
    <property type="match status" value="1"/>
</dbReference>
<dbReference type="InterPro" id="IPR011701">
    <property type="entry name" value="MFS"/>
</dbReference>
<dbReference type="InterPro" id="IPR020846">
    <property type="entry name" value="MFS_dom"/>
</dbReference>
<dbReference type="InterPro" id="IPR036259">
    <property type="entry name" value="MFS_trans_sf"/>
</dbReference>
<dbReference type="PANTHER" id="PTHR23501">
    <property type="entry name" value="MAJOR FACILITATOR SUPERFAMILY"/>
    <property type="match status" value="1"/>
</dbReference>
<dbReference type="PANTHER" id="PTHR23501:SF199">
    <property type="entry name" value="MFS EFFLUX TRANSPORTER INPD-RELATED"/>
    <property type="match status" value="1"/>
</dbReference>
<dbReference type="Pfam" id="PF07690">
    <property type="entry name" value="MFS_1"/>
    <property type="match status" value="1"/>
</dbReference>
<dbReference type="SUPFAM" id="SSF103473">
    <property type="entry name" value="MFS general substrate transporter"/>
    <property type="match status" value="1"/>
</dbReference>
<dbReference type="PROSITE" id="PS50850">
    <property type="entry name" value="MFS"/>
    <property type="match status" value="1"/>
</dbReference>
<accession>A0A142I724</accession>
<sequence>MESDGKSDRTKVPTAASSLNEKKADLNDQPGHSTDTEGNGSDNNNTQVGEKHHVSADDGPVDTAPVELAATQHQHPVEAEQNYPSGLKLTIILLALELAVLCVALDNTIVATAIPEITNQFHALTDVGWYGSAYLLTLCAFQLFFGRLYQLFSIKWVFLSCLFIFEIGSLICGVAPNSTALIVGRAVAGLGAAGIFSGALIIIAFSTPLEKRAIFTALISAIFGISSVIGPLLGGVFTDRVTWRWCFYINLPIGGVTAVALVFFLNIPPREAQPDTNETLRQKIMHFDPIGTAIFLPCIVCILLALQWGGTTYAWSDGRVVALLVLFGVLLITFVGLQFWMGEDATVPVRIVRQRSVGSAAVFTGLVGASFFIMVYYLPIWFQAIRGATATQSGINTLPMMISTTVGNIVGGVFVSFTGYYTPMMYALPPMASVGVGLMTTWTVDVSTGKWIGYQILFGLGLGLGMQQGIVTAQASLPVADTAIGTSLQVFAQMFGGSLFVSVAQNLFSNEVIKGLAAVDELGMTPQAVFNAGATELDNLFGSNPSLLAEVKVVYNDAVIWTFRTALITTCLSVLAVIFVKSGSVKGKKIEMVAA</sequence>
<evidence type="ECO:0000255" key="1"/>
<evidence type="ECO:0000255" key="2">
    <source>
        <dbReference type="PROSITE-ProRule" id="PRU00498"/>
    </source>
</evidence>
<evidence type="ECO:0000256" key="3">
    <source>
        <dbReference type="SAM" id="MobiDB-lite"/>
    </source>
</evidence>
<evidence type="ECO:0000269" key="4">
    <source>
    </source>
</evidence>
<evidence type="ECO:0000269" key="5">
    <source>
    </source>
</evidence>
<evidence type="ECO:0000303" key="6">
    <source>
    </source>
</evidence>
<evidence type="ECO:0000303" key="7">
    <source>
    </source>
</evidence>
<evidence type="ECO:0000305" key="8"/>
<evidence type="ECO:0000305" key="9">
    <source>
    </source>
</evidence>
<keyword id="KW-1003">Cell membrane</keyword>
<keyword id="KW-0325">Glycoprotein</keyword>
<keyword id="KW-0472">Membrane</keyword>
<keyword id="KW-0812">Transmembrane</keyword>
<keyword id="KW-1133">Transmembrane helix</keyword>
<keyword id="KW-0813">Transport</keyword>
<keyword id="KW-0843">Virulence</keyword>
<comment type="function">
    <text evidence="4 5 9">MFS-type transporter; part of the gene cluster that mediates the biosynthesis of the phomopsins, a group of hexapeptide mycotoxins which infects lupins and causes lupinosis disease in livestock (PubMed:26979951, PubMed:34608734). PhomT is likely to be involved in the cellular export of phomopsins (Probable).</text>
</comment>
<comment type="subcellular location">
    <subcellularLocation>
        <location evidence="9">Cell membrane</location>
        <topology evidence="1">Multi-pass membrane protein</topology>
    </subcellularLocation>
</comment>
<comment type="similarity">
    <text evidence="8">Belongs to the major facilitator superfamily. TCR/Tet family.</text>
</comment>
<organism>
    <name type="scientific">Diaporthe leptostromiformis</name>
    <name type="common">Lupinosis disease fungus</name>
    <name type="synonym">Phomopsis leptostromiformis</name>
    <dbReference type="NCBI Taxonomy" id="291059"/>
    <lineage>
        <taxon>Eukaryota</taxon>
        <taxon>Fungi</taxon>
        <taxon>Dikarya</taxon>
        <taxon>Ascomycota</taxon>
        <taxon>Pezizomycotina</taxon>
        <taxon>Sordariomycetes</taxon>
        <taxon>Sordariomycetidae</taxon>
        <taxon>Diaporthales</taxon>
        <taxon>Diaporthaceae</taxon>
        <taxon>Diaporthe</taxon>
    </lineage>
</organism>
<gene>
    <name evidence="7" type="primary">phomT</name>
    <name evidence="7" type="synonym">phomT'</name>
</gene>
<feature type="chain" id="PRO_0000458382" description="MFS-type transporter phomT">
    <location>
        <begin position="1"/>
        <end position="595"/>
    </location>
</feature>
<feature type="transmembrane region" description="Helical" evidence="1">
    <location>
        <begin position="91"/>
        <end position="111"/>
    </location>
</feature>
<feature type="transmembrane region" description="Helical" evidence="1">
    <location>
        <begin position="126"/>
        <end position="146"/>
    </location>
</feature>
<feature type="transmembrane region" description="Helical" evidence="1">
    <location>
        <begin position="156"/>
        <end position="176"/>
    </location>
</feature>
<feature type="transmembrane region" description="Helical" evidence="1">
    <location>
        <begin position="186"/>
        <end position="206"/>
    </location>
</feature>
<feature type="transmembrane region" description="Helical" evidence="1">
    <location>
        <begin position="217"/>
        <end position="237"/>
    </location>
</feature>
<feature type="transmembrane region" description="Helical" evidence="1">
    <location>
        <begin position="245"/>
        <end position="265"/>
    </location>
</feature>
<feature type="transmembrane region" description="Helical" evidence="1">
    <location>
        <begin position="290"/>
        <end position="310"/>
    </location>
</feature>
<feature type="transmembrane region" description="Helical" evidence="1">
    <location>
        <begin position="320"/>
        <end position="340"/>
    </location>
</feature>
<feature type="transmembrane region" description="Helical" evidence="1">
    <location>
        <begin position="362"/>
        <end position="382"/>
    </location>
</feature>
<feature type="transmembrane region" description="Helical" evidence="1">
    <location>
        <begin position="409"/>
        <end position="429"/>
    </location>
</feature>
<feature type="transmembrane region" description="Helical" evidence="1">
    <location>
        <begin position="451"/>
        <end position="471"/>
    </location>
</feature>
<feature type="transmembrane region" description="Helical" evidence="1">
    <location>
        <begin position="483"/>
        <end position="503"/>
    </location>
</feature>
<feature type="transmembrane region" description="Helical" evidence="1">
    <location>
        <begin position="559"/>
        <end position="579"/>
    </location>
</feature>
<feature type="region of interest" description="Disordered" evidence="3">
    <location>
        <begin position="1"/>
        <end position="62"/>
    </location>
</feature>
<feature type="compositionally biased region" description="Basic and acidic residues" evidence="3">
    <location>
        <begin position="1"/>
        <end position="11"/>
    </location>
</feature>
<feature type="compositionally biased region" description="Polar residues" evidence="3">
    <location>
        <begin position="30"/>
        <end position="48"/>
    </location>
</feature>
<feature type="glycosylation site" description="N-linked (GlcNAc...) asparagine" evidence="2">
    <location>
        <position position="39"/>
    </location>
</feature>
<feature type="glycosylation site" description="N-linked (GlcNAc...) asparagine" evidence="2">
    <location>
        <position position="44"/>
    </location>
</feature>
<feature type="glycosylation site" description="N-linked (GlcNAc...) asparagine" evidence="2">
    <location>
        <position position="177"/>
    </location>
</feature>
<feature type="glycosylation site" description="N-linked (GlcNAc...) asparagine" evidence="2">
    <location>
        <position position="277"/>
    </location>
</feature>
<name>PHOT_DIALO</name>